<protein>
    <recommendedName>
        <fullName>Zinc metalloprotease RasP</fullName>
        <ecNumber>3.4.24.-</ecNumber>
    </recommendedName>
    <alternativeName>
        <fullName>Regulating alternative sigma factor protease</fullName>
    </alternativeName>
    <alternativeName>
        <fullName>Regulating anti-sigma-W factor activity protease</fullName>
    </alternativeName>
</protein>
<dbReference type="EC" id="3.4.24.-"/>
<dbReference type="EMBL" id="AP006627">
    <property type="protein sequence ID" value="BAD64770.1"/>
    <property type="molecule type" value="Genomic_DNA"/>
</dbReference>
<dbReference type="SMR" id="Q5WFT5"/>
<dbReference type="STRING" id="66692.ABC2235"/>
<dbReference type="KEGG" id="bcl:ABC2235"/>
<dbReference type="eggNOG" id="COG0750">
    <property type="taxonomic scope" value="Bacteria"/>
</dbReference>
<dbReference type="HOGENOM" id="CLU_025778_1_0_9"/>
<dbReference type="OrthoDB" id="9782003at2"/>
<dbReference type="Proteomes" id="UP000001168">
    <property type="component" value="Chromosome"/>
</dbReference>
<dbReference type="GO" id="GO:0005886">
    <property type="term" value="C:plasma membrane"/>
    <property type="evidence" value="ECO:0007669"/>
    <property type="project" value="UniProtKB-SubCell"/>
</dbReference>
<dbReference type="GO" id="GO:0046872">
    <property type="term" value="F:metal ion binding"/>
    <property type="evidence" value="ECO:0007669"/>
    <property type="project" value="UniProtKB-KW"/>
</dbReference>
<dbReference type="GO" id="GO:0004222">
    <property type="term" value="F:metalloendopeptidase activity"/>
    <property type="evidence" value="ECO:0007669"/>
    <property type="project" value="InterPro"/>
</dbReference>
<dbReference type="GO" id="GO:0006508">
    <property type="term" value="P:proteolysis"/>
    <property type="evidence" value="ECO:0007669"/>
    <property type="project" value="UniProtKB-KW"/>
</dbReference>
<dbReference type="CDD" id="cd23081">
    <property type="entry name" value="cpPDZ_EcRseP-like"/>
    <property type="match status" value="1"/>
</dbReference>
<dbReference type="CDD" id="cd06163">
    <property type="entry name" value="S2P-M50_PDZ_RseP-like"/>
    <property type="match status" value="1"/>
</dbReference>
<dbReference type="Gene3D" id="2.30.42.10">
    <property type="match status" value="1"/>
</dbReference>
<dbReference type="InterPro" id="IPR001478">
    <property type="entry name" value="PDZ"/>
</dbReference>
<dbReference type="InterPro" id="IPR036034">
    <property type="entry name" value="PDZ_sf"/>
</dbReference>
<dbReference type="InterPro" id="IPR004387">
    <property type="entry name" value="Pept_M50_Zn"/>
</dbReference>
<dbReference type="InterPro" id="IPR008915">
    <property type="entry name" value="Peptidase_M50"/>
</dbReference>
<dbReference type="NCBIfam" id="TIGR00054">
    <property type="entry name" value="RIP metalloprotease RseP"/>
    <property type="match status" value="1"/>
</dbReference>
<dbReference type="PANTHER" id="PTHR42837:SF2">
    <property type="entry name" value="MEMBRANE METALLOPROTEASE ARASP2, CHLOROPLASTIC-RELATED"/>
    <property type="match status" value="1"/>
</dbReference>
<dbReference type="PANTHER" id="PTHR42837">
    <property type="entry name" value="REGULATOR OF SIGMA-E PROTEASE RSEP"/>
    <property type="match status" value="1"/>
</dbReference>
<dbReference type="Pfam" id="PF13180">
    <property type="entry name" value="PDZ_2"/>
    <property type="match status" value="1"/>
</dbReference>
<dbReference type="Pfam" id="PF02163">
    <property type="entry name" value="Peptidase_M50"/>
    <property type="match status" value="1"/>
</dbReference>
<dbReference type="SMART" id="SM00228">
    <property type="entry name" value="PDZ"/>
    <property type="match status" value="1"/>
</dbReference>
<dbReference type="SUPFAM" id="SSF50156">
    <property type="entry name" value="PDZ domain-like"/>
    <property type="match status" value="1"/>
</dbReference>
<dbReference type="PROSITE" id="PS50106">
    <property type="entry name" value="PDZ"/>
    <property type="match status" value="1"/>
</dbReference>
<dbReference type="PROSITE" id="PS00142">
    <property type="entry name" value="ZINC_PROTEASE"/>
    <property type="match status" value="1"/>
</dbReference>
<feature type="chain" id="PRO_0000248825" description="Zinc metalloprotease RasP">
    <location>
        <begin position="1"/>
        <end position="418"/>
    </location>
</feature>
<feature type="transmembrane region" description="Helical" evidence="2">
    <location>
        <begin position="5"/>
        <end position="25"/>
    </location>
</feature>
<feature type="transmembrane region" description="Helical" evidence="2">
    <location>
        <begin position="170"/>
        <end position="190"/>
    </location>
</feature>
<feature type="transmembrane region" description="Helical" evidence="2">
    <location>
        <begin position="345"/>
        <end position="365"/>
    </location>
</feature>
<feature type="transmembrane region" description="Helical" evidence="2">
    <location>
        <begin position="390"/>
        <end position="410"/>
    </location>
</feature>
<feature type="domain" description="PDZ" evidence="3">
    <location>
        <begin position="183"/>
        <end position="267"/>
    </location>
</feature>
<feature type="active site" evidence="4">
    <location>
        <position position="19"/>
    </location>
</feature>
<feature type="binding site" evidence="4">
    <location>
        <position position="18"/>
    </location>
    <ligand>
        <name>Zn(2+)</name>
        <dbReference type="ChEBI" id="CHEBI:29105"/>
        <note>catalytic</note>
    </ligand>
</feature>
<feature type="binding site" evidence="4">
    <location>
        <position position="22"/>
    </location>
    <ligand>
        <name>Zn(2+)</name>
        <dbReference type="ChEBI" id="CHEBI:29105"/>
        <note>catalytic</note>
    </ligand>
</feature>
<keyword id="KW-1003">Cell membrane</keyword>
<keyword id="KW-0378">Hydrolase</keyword>
<keyword id="KW-0472">Membrane</keyword>
<keyword id="KW-0479">Metal-binding</keyword>
<keyword id="KW-0482">Metalloprotease</keyword>
<keyword id="KW-0645">Protease</keyword>
<keyword id="KW-1185">Reference proteome</keyword>
<keyword id="KW-0812">Transmembrane</keyword>
<keyword id="KW-1133">Transmembrane helix</keyword>
<keyword id="KW-0862">Zinc</keyword>
<name>RASP_SHOC1</name>
<reference key="1">
    <citation type="submission" date="2003-10" db="EMBL/GenBank/DDBJ databases">
        <title>The complete genome sequence of the alkaliphilic Bacillus clausii KSM-K16.</title>
        <authorList>
            <person name="Takaki Y."/>
            <person name="Kageyama Y."/>
            <person name="Shimamura S."/>
            <person name="Suzuki H."/>
            <person name="Nishi S."/>
            <person name="Hatada Y."/>
            <person name="Kawai S."/>
            <person name="Ito S."/>
            <person name="Horikoshi K."/>
        </authorList>
    </citation>
    <scope>NUCLEOTIDE SEQUENCE [LARGE SCALE GENOMIC DNA]</scope>
    <source>
        <strain>KSM-K16</strain>
    </source>
</reference>
<comment type="function">
    <text evidence="1">Is responsible for Site-2 cleavage of the RsiW anti-sigma factor. This results, after a third proteolytic step catalyzed by the ClpXP protease, in the release of SigW and the transcription activation of the genes under the control of the sigma-W factor (By similarity).</text>
</comment>
<comment type="cofactor">
    <cofactor evidence="1">
        <name>Zn(2+)</name>
        <dbReference type="ChEBI" id="CHEBI:29105"/>
    </cofactor>
</comment>
<comment type="subcellular location">
    <subcellularLocation>
        <location evidence="5">Cell membrane</location>
        <topology evidence="5">Multi-pass membrane protein</topology>
    </subcellularLocation>
</comment>
<comment type="similarity">
    <text evidence="5">Belongs to the peptidase M50B family.</text>
</comment>
<accession>Q5WFT5</accession>
<sequence>MNTLLAFIAIFSVLVFVHEWGHLYFAKKAGILCYEFAIGMGPKLFAFERNDTIYTIRLLPIGGYVRMAGEEPEQPTIRPGYEIGLVLDEKDTVKELIVNNKSKHPEAQVVQVERIDLVHDLFVETIDEDTGELVRYPIDEKAFIVQDEVAQIIAPWKRQFGSKPLPKRAMAIFAGPLMNFILGFVILLGLSLYQGVTLSSEIVINGENSPAEAAGLQDGDVITAVNGVEVDSWKEMTTEVKKYPGEEVSIDYERNGEALQTNATLSQVEVMPDEYEGFLGVSGVPEFSLLGSLQYAGNEFINMATSIFDTLGLIFTGQFSLDYISGPVGIYDITDQAVSLGIQTVIFFAALLSINLGVINLMPIPALDGGRLMFLAYEGIRGKPVSPEKEGAIQFIGFALVMLLMIVVTWNDISKLFS</sequence>
<gene>
    <name type="primary">rasP</name>
    <name type="ordered locus">ABC2235</name>
</gene>
<evidence type="ECO:0000250" key="1"/>
<evidence type="ECO:0000255" key="2"/>
<evidence type="ECO:0000255" key="3">
    <source>
        <dbReference type="PROSITE-ProRule" id="PRU00143"/>
    </source>
</evidence>
<evidence type="ECO:0000255" key="4">
    <source>
        <dbReference type="PROSITE-ProRule" id="PRU10095"/>
    </source>
</evidence>
<evidence type="ECO:0000305" key="5"/>
<proteinExistence type="inferred from homology"/>
<organism>
    <name type="scientific">Shouchella clausii (strain KSM-K16)</name>
    <name type="common">Alkalihalobacillus clausii</name>
    <dbReference type="NCBI Taxonomy" id="66692"/>
    <lineage>
        <taxon>Bacteria</taxon>
        <taxon>Bacillati</taxon>
        <taxon>Bacillota</taxon>
        <taxon>Bacilli</taxon>
        <taxon>Bacillales</taxon>
        <taxon>Bacillaceae</taxon>
        <taxon>Shouchella</taxon>
    </lineage>
</organism>